<proteinExistence type="inferred from homology"/>
<evidence type="ECO:0000250" key="1"/>
<evidence type="ECO:0000255" key="2">
    <source>
        <dbReference type="HAMAP-Rule" id="MF_01109"/>
    </source>
</evidence>
<protein>
    <recommendedName>
        <fullName evidence="2">Ornithine carbamoyltransferase</fullName>
        <shortName evidence="2">OTCase</shortName>
        <ecNumber evidence="2">2.1.3.3</ecNumber>
    </recommendedName>
</protein>
<accession>A4FYS5</accession>
<sequence>MDLLTLWNLEREEVLKIIEDAEYFKKNRCGHDILKNKSIALIFESPSTRTRMSFDLAVHELGGHSLMMNEGEIHLGKKESIADTARVMSRFVDAIVARVKSHKTLEDLAEYGSVPVINALCDLAHPCQILADLLTMKENGKDFKGLKLAYFGDGNNVSNSLMIAGAILGMDVVIATPRSYEPSGLFVKKALEIIAKYGEGSLTLTDDPEIAAKDADVLYTDVWISMNDKNKNLEEILKIFPKFQINAELLSKAKEDAIVLHCLPANRGFEITDEVIDGKQSKVFDQAENRLHAQKSVLKYIFEH</sequence>
<keyword id="KW-0028">Amino-acid biosynthesis</keyword>
<keyword id="KW-0055">Arginine biosynthesis</keyword>
<keyword id="KW-0963">Cytoplasm</keyword>
<keyword id="KW-0808">Transferase</keyword>
<gene>
    <name evidence="2" type="primary">argF</name>
    <name type="ordered locus">MmarC5_1054</name>
</gene>
<feature type="chain" id="PRO_1000084849" description="Ornithine carbamoyltransferase">
    <location>
        <begin position="1"/>
        <end position="304"/>
    </location>
</feature>
<feature type="binding site" evidence="2">
    <location>
        <begin position="47"/>
        <end position="50"/>
    </location>
    <ligand>
        <name>carbamoyl phosphate</name>
        <dbReference type="ChEBI" id="CHEBI:58228"/>
    </ligand>
</feature>
<feature type="binding site" evidence="2">
    <location>
        <position position="98"/>
    </location>
    <ligand>
        <name>carbamoyl phosphate</name>
        <dbReference type="ChEBI" id="CHEBI:58228"/>
    </ligand>
</feature>
<feature type="binding site" evidence="2">
    <location>
        <begin position="125"/>
        <end position="128"/>
    </location>
    <ligand>
        <name>carbamoyl phosphate</name>
        <dbReference type="ChEBI" id="CHEBI:58228"/>
    </ligand>
</feature>
<feature type="binding site" evidence="2">
    <location>
        <position position="156"/>
    </location>
    <ligand>
        <name>L-ornithine</name>
        <dbReference type="ChEBI" id="CHEBI:46911"/>
    </ligand>
</feature>
<feature type="binding site" evidence="2">
    <location>
        <position position="221"/>
    </location>
    <ligand>
        <name>L-ornithine</name>
        <dbReference type="ChEBI" id="CHEBI:46911"/>
    </ligand>
</feature>
<feature type="binding site" evidence="2">
    <location>
        <begin position="225"/>
        <end position="226"/>
    </location>
    <ligand>
        <name>L-ornithine</name>
        <dbReference type="ChEBI" id="CHEBI:46911"/>
    </ligand>
</feature>
<feature type="binding site" evidence="2">
    <location>
        <begin position="262"/>
        <end position="263"/>
    </location>
    <ligand>
        <name>carbamoyl phosphate</name>
        <dbReference type="ChEBI" id="CHEBI:58228"/>
    </ligand>
</feature>
<feature type="binding site" evidence="2">
    <location>
        <position position="290"/>
    </location>
    <ligand>
        <name>carbamoyl phosphate</name>
        <dbReference type="ChEBI" id="CHEBI:58228"/>
    </ligand>
</feature>
<comment type="function">
    <text evidence="1">Reversibly catalyzes the transfer of the carbamoyl group from carbamoyl phosphate (CP) to the N(epsilon) atom of ornithine (ORN) to produce L-citrulline.</text>
</comment>
<comment type="catalytic activity">
    <reaction evidence="2">
        <text>carbamoyl phosphate + L-ornithine = L-citrulline + phosphate + H(+)</text>
        <dbReference type="Rhea" id="RHEA:19513"/>
        <dbReference type="ChEBI" id="CHEBI:15378"/>
        <dbReference type="ChEBI" id="CHEBI:43474"/>
        <dbReference type="ChEBI" id="CHEBI:46911"/>
        <dbReference type="ChEBI" id="CHEBI:57743"/>
        <dbReference type="ChEBI" id="CHEBI:58228"/>
        <dbReference type="EC" id="2.1.3.3"/>
    </reaction>
</comment>
<comment type="pathway">
    <text evidence="2">Amino-acid biosynthesis; L-arginine biosynthesis; L-arginine from L-ornithine and carbamoyl phosphate: step 1/3.</text>
</comment>
<comment type="subcellular location">
    <subcellularLocation>
        <location evidence="2">Cytoplasm</location>
    </subcellularLocation>
</comment>
<comment type="similarity">
    <text evidence="2">Belongs to the aspartate/ornithine carbamoyltransferase superfamily. OTCase family.</text>
</comment>
<name>OTC_METM5</name>
<organism>
    <name type="scientific">Methanococcus maripaludis (strain C5 / ATCC BAA-1333)</name>
    <dbReference type="NCBI Taxonomy" id="402880"/>
    <lineage>
        <taxon>Archaea</taxon>
        <taxon>Methanobacteriati</taxon>
        <taxon>Methanobacteriota</taxon>
        <taxon>Methanomada group</taxon>
        <taxon>Methanococci</taxon>
        <taxon>Methanococcales</taxon>
        <taxon>Methanococcaceae</taxon>
        <taxon>Methanococcus</taxon>
    </lineage>
</organism>
<reference key="1">
    <citation type="submission" date="2007-03" db="EMBL/GenBank/DDBJ databases">
        <title>Complete sequence of chromosome of Methanococcus maripaludis C5.</title>
        <authorList>
            <consortium name="US DOE Joint Genome Institute"/>
            <person name="Copeland A."/>
            <person name="Lucas S."/>
            <person name="Lapidus A."/>
            <person name="Barry K."/>
            <person name="Glavina del Rio T."/>
            <person name="Dalin E."/>
            <person name="Tice H."/>
            <person name="Pitluck S."/>
            <person name="Chertkov O."/>
            <person name="Brettin T."/>
            <person name="Bruce D."/>
            <person name="Han C."/>
            <person name="Detter J.C."/>
            <person name="Schmutz J."/>
            <person name="Larimer F."/>
            <person name="Land M."/>
            <person name="Hauser L."/>
            <person name="Kyrpides N."/>
            <person name="Mikhailova N."/>
            <person name="Sieprawska-Lupa M."/>
            <person name="Whitman W.B."/>
            <person name="Richardson P."/>
        </authorList>
    </citation>
    <scope>NUCLEOTIDE SEQUENCE [LARGE SCALE GENOMIC DNA]</scope>
    <source>
        <strain>C5 / ATCC BAA-1333</strain>
    </source>
</reference>
<dbReference type="EC" id="2.1.3.3" evidence="2"/>
<dbReference type="EMBL" id="CP000609">
    <property type="protein sequence ID" value="ABO35359.1"/>
    <property type="molecule type" value="Genomic_DNA"/>
</dbReference>
<dbReference type="RefSeq" id="WP_011868812.1">
    <property type="nucleotide sequence ID" value="NC_009135.1"/>
</dbReference>
<dbReference type="SMR" id="A4FYS5"/>
<dbReference type="STRING" id="402880.MmarC5_1054"/>
<dbReference type="GeneID" id="4927736"/>
<dbReference type="KEGG" id="mmq:MmarC5_1054"/>
<dbReference type="eggNOG" id="arCOG00912">
    <property type="taxonomic scope" value="Archaea"/>
</dbReference>
<dbReference type="HOGENOM" id="CLU_043846_3_2_2"/>
<dbReference type="OrthoDB" id="4696at2157"/>
<dbReference type="UniPathway" id="UPA00068">
    <property type="reaction ID" value="UER00112"/>
</dbReference>
<dbReference type="Proteomes" id="UP000000253">
    <property type="component" value="Chromosome"/>
</dbReference>
<dbReference type="GO" id="GO:0005737">
    <property type="term" value="C:cytoplasm"/>
    <property type="evidence" value="ECO:0007669"/>
    <property type="project" value="UniProtKB-SubCell"/>
</dbReference>
<dbReference type="GO" id="GO:0016597">
    <property type="term" value="F:amino acid binding"/>
    <property type="evidence" value="ECO:0007669"/>
    <property type="project" value="InterPro"/>
</dbReference>
<dbReference type="GO" id="GO:0004585">
    <property type="term" value="F:ornithine carbamoyltransferase activity"/>
    <property type="evidence" value="ECO:0007669"/>
    <property type="project" value="UniProtKB-UniRule"/>
</dbReference>
<dbReference type="GO" id="GO:0042450">
    <property type="term" value="P:arginine biosynthetic process via ornithine"/>
    <property type="evidence" value="ECO:0007669"/>
    <property type="project" value="TreeGrafter"/>
</dbReference>
<dbReference type="GO" id="GO:0019240">
    <property type="term" value="P:citrulline biosynthetic process"/>
    <property type="evidence" value="ECO:0007669"/>
    <property type="project" value="TreeGrafter"/>
</dbReference>
<dbReference type="GO" id="GO:0006526">
    <property type="term" value="P:L-arginine biosynthetic process"/>
    <property type="evidence" value="ECO:0007669"/>
    <property type="project" value="UniProtKB-UniRule"/>
</dbReference>
<dbReference type="FunFam" id="3.40.50.1370:FF:000008">
    <property type="entry name" value="Ornithine carbamoyltransferase"/>
    <property type="match status" value="1"/>
</dbReference>
<dbReference type="Gene3D" id="3.40.50.1370">
    <property type="entry name" value="Aspartate/ornithine carbamoyltransferase"/>
    <property type="match status" value="2"/>
</dbReference>
<dbReference type="HAMAP" id="MF_01109">
    <property type="entry name" value="OTCase"/>
    <property type="match status" value="1"/>
</dbReference>
<dbReference type="InterPro" id="IPR006132">
    <property type="entry name" value="Asp/Orn_carbamoyltranf_P-bd"/>
</dbReference>
<dbReference type="InterPro" id="IPR006130">
    <property type="entry name" value="Asp/Orn_carbamoylTrfase"/>
</dbReference>
<dbReference type="InterPro" id="IPR036901">
    <property type="entry name" value="Asp/Orn_carbamoylTrfase_sf"/>
</dbReference>
<dbReference type="InterPro" id="IPR006131">
    <property type="entry name" value="Asp_carbamoyltransf_Asp/Orn-bd"/>
</dbReference>
<dbReference type="InterPro" id="IPR002292">
    <property type="entry name" value="Orn/put_carbamltrans"/>
</dbReference>
<dbReference type="InterPro" id="IPR024904">
    <property type="entry name" value="OTCase_ArgI"/>
</dbReference>
<dbReference type="NCBIfam" id="TIGR00658">
    <property type="entry name" value="orni_carb_tr"/>
    <property type="match status" value="1"/>
</dbReference>
<dbReference type="NCBIfam" id="NF001986">
    <property type="entry name" value="PRK00779.1"/>
    <property type="match status" value="1"/>
</dbReference>
<dbReference type="PANTHER" id="PTHR45753">
    <property type="entry name" value="ORNITHINE CARBAMOYLTRANSFERASE, MITOCHONDRIAL"/>
    <property type="match status" value="1"/>
</dbReference>
<dbReference type="PANTHER" id="PTHR45753:SF3">
    <property type="entry name" value="ORNITHINE TRANSCARBAMYLASE, MITOCHONDRIAL"/>
    <property type="match status" value="1"/>
</dbReference>
<dbReference type="Pfam" id="PF00185">
    <property type="entry name" value="OTCace"/>
    <property type="match status" value="1"/>
</dbReference>
<dbReference type="Pfam" id="PF02729">
    <property type="entry name" value="OTCace_N"/>
    <property type="match status" value="1"/>
</dbReference>
<dbReference type="PRINTS" id="PR00100">
    <property type="entry name" value="AOTCASE"/>
</dbReference>
<dbReference type="PRINTS" id="PR00102">
    <property type="entry name" value="OTCASE"/>
</dbReference>
<dbReference type="SUPFAM" id="SSF53671">
    <property type="entry name" value="Aspartate/ornithine carbamoyltransferase"/>
    <property type="match status" value="1"/>
</dbReference>